<comment type="function">
    <text evidence="1">Required for the import and folding of small cysteine-containing proteins (small Tim) in the mitochondrial intermembrane space (IMS). Forms a redox cycle with ERV1 that involves a disulfide relay system. Precursor proteins to be imported into the IMS are translocated in their reduced form into the mitochondria. The oxidized form of MIA40 forms a transient intermolecular disulfide bridge with the reduced precursor protein, resulting in oxidation of the precursor protein that now contains an intramolecular disulfide bond and is able to undergo folding in the IMS (By similarity).</text>
</comment>
<comment type="cofactor">
    <cofactor evidence="1">
        <name>Cu(2+)</name>
        <dbReference type="ChEBI" id="CHEBI:29036"/>
    </cofactor>
    <cofactor evidence="1">
        <name>Zn(2+)</name>
        <dbReference type="ChEBI" id="CHEBI:29105"/>
    </cofactor>
    <text evidence="1">Cu(2+) or Zn(2+).</text>
</comment>
<comment type="subunit">
    <text evidence="1">Monomer.</text>
</comment>
<comment type="subcellular location">
    <subcellularLocation>
        <location evidence="1">Mitochondrion inner membrane</location>
        <topology evidence="1">Single-pass type II membrane protein</topology>
        <orientation evidence="1">Intermembrane side</orientation>
    </subcellularLocation>
</comment>
<comment type="domain">
    <text evidence="1">The CHCH domain contains a conserved twin Cys-X(9)-Cys motif which is required for import and stability of MIA40 in mitochondria.</text>
</comment>
<evidence type="ECO:0000250" key="1"/>
<evidence type="ECO:0000255" key="2"/>
<evidence type="ECO:0000255" key="3">
    <source>
        <dbReference type="PROSITE-ProRule" id="PRU01150"/>
    </source>
</evidence>
<evidence type="ECO:0000256" key="4">
    <source>
        <dbReference type="SAM" id="MobiDB-lite"/>
    </source>
</evidence>
<protein>
    <recommendedName>
        <fullName>Mitochondrial intermembrane space import and assembly protein 40</fullName>
    </recommendedName>
    <alternativeName>
        <fullName>Mitochondrial import inner membrane translocase TIM40</fullName>
    </alternativeName>
</protein>
<name>MIA40_CANGA</name>
<keyword id="KW-1015">Disulfide bond</keyword>
<keyword id="KW-0472">Membrane</keyword>
<keyword id="KW-0496">Mitochondrion</keyword>
<keyword id="KW-0999">Mitochondrion inner membrane</keyword>
<keyword id="KW-0560">Oxidoreductase</keyword>
<keyword id="KW-0653">Protein transport</keyword>
<keyword id="KW-0676">Redox-active center</keyword>
<keyword id="KW-1185">Reference proteome</keyword>
<keyword id="KW-0735">Signal-anchor</keyword>
<keyword id="KW-0809">Transit peptide</keyword>
<keyword id="KW-0811">Translocation</keyword>
<keyword id="KW-0812">Transmembrane</keyword>
<keyword id="KW-1133">Transmembrane helix</keyword>
<keyword id="KW-0813">Transport</keyword>
<proteinExistence type="inferred from homology"/>
<accession>Q6FW26</accession>
<gene>
    <name type="primary">MIA40</name>
    <name type="synonym">TIM40</name>
    <name type="ordered locus">CAGL0D03520g</name>
</gene>
<sequence>MVSAVSRQLVNRQLNRVLLRNARIAPFARATRFYSSKYAQESENAKRHKMGLLIAGVAVAGAIVFVTPPQWKKYFRAAKKVEEVAESKEDPVSEAAEEVSESVQESTEEPQQSQEKETADVGNEQAQDESASSGDSEAKKAHDEFADQNEASEKESAPMGESADADQTAKDETVAEKTGNSKSESSESDQSEQDILSSDLEETMETVSEADKELHQISDNTVLSSEEDKTPKAEELKSTSPSGNDEEPKKEDDSSKTIHSLNSEKDMEAVEEEVKQESAYNPDTGEINWDCPCLGGMAHGPCGEEFKAAFSCFVYSEAEPKGIDCVEKFQHMQDCFRRYPEHYAEQLADPADDENVDHEKNLSEGKDTGVDSTPPKDEAYLKTEKEKKIEENASPDEDTASKKD</sequence>
<organism>
    <name type="scientific">Candida glabrata (strain ATCC 2001 / BCRC 20586 / JCM 3761 / NBRC 0622 / NRRL Y-65 / CBS 138)</name>
    <name type="common">Yeast</name>
    <name type="synonym">Nakaseomyces glabratus</name>
    <dbReference type="NCBI Taxonomy" id="284593"/>
    <lineage>
        <taxon>Eukaryota</taxon>
        <taxon>Fungi</taxon>
        <taxon>Dikarya</taxon>
        <taxon>Ascomycota</taxon>
        <taxon>Saccharomycotina</taxon>
        <taxon>Saccharomycetes</taxon>
        <taxon>Saccharomycetales</taxon>
        <taxon>Saccharomycetaceae</taxon>
        <taxon>Nakaseomyces</taxon>
    </lineage>
</organism>
<dbReference type="EMBL" id="CR380950">
    <property type="protein sequence ID" value="CAG58479.1"/>
    <property type="molecule type" value="Genomic_DNA"/>
</dbReference>
<dbReference type="RefSeq" id="XP_445568.1">
    <property type="nucleotide sequence ID" value="XM_445568.1"/>
</dbReference>
<dbReference type="SMR" id="Q6FW26"/>
<dbReference type="STRING" id="284593.Q6FW26"/>
<dbReference type="EnsemblFungi" id="CAGL0D03520g-T">
    <property type="protein sequence ID" value="CAGL0D03520g-T-p1"/>
    <property type="gene ID" value="CAGL0D03520g"/>
</dbReference>
<dbReference type="KEGG" id="cgr:2887208"/>
<dbReference type="CGD" id="CAL0127949">
    <property type="gene designation" value="CAGL0D03520g"/>
</dbReference>
<dbReference type="VEuPathDB" id="FungiDB:CAGL0D03520g"/>
<dbReference type="eggNOG" id="KOG4149">
    <property type="taxonomic scope" value="Eukaryota"/>
</dbReference>
<dbReference type="HOGENOM" id="CLU_681511_0_0_1"/>
<dbReference type="InParanoid" id="Q6FW26"/>
<dbReference type="OMA" id="RKFKPWR"/>
<dbReference type="Proteomes" id="UP000002428">
    <property type="component" value="Chromosome D"/>
</dbReference>
<dbReference type="GO" id="GO:0005743">
    <property type="term" value="C:mitochondrial inner membrane"/>
    <property type="evidence" value="ECO:0007669"/>
    <property type="project" value="UniProtKB-SubCell"/>
</dbReference>
<dbReference type="GO" id="GO:0005758">
    <property type="term" value="C:mitochondrial intermembrane space"/>
    <property type="evidence" value="ECO:0007669"/>
    <property type="project" value="TreeGrafter"/>
</dbReference>
<dbReference type="GO" id="GO:0015035">
    <property type="term" value="F:protein-disulfide reductase activity"/>
    <property type="evidence" value="ECO:0007669"/>
    <property type="project" value="InterPro"/>
</dbReference>
<dbReference type="GO" id="GO:0045041">
    <property type="term" value="P:protein import into mitochondrial intermembrane space"/>
    <property type="evidence" value="ECO:0007669"/>
    <property type="project" value="InterPro"/>
</dbReference>
<dbReference type="FunFam" id="1.10.287.2900:FF:000002">
    <property type="entry name" value="Mitochondrial intermembrane space import and assembly protein"/>
    <property type="match status" value="1"/>
</dbReference>
<dbReference type="Gene3D" id="1.10.287.2900">
    <property type="match status" value="1"/>
</dbReference>
<dbReference type="InterPro" id="IPR010625">
    <property type="entry name" value="CHCH"/>
</dbReference>
<dbReference type="InterPro" id="IPR039289">
    <property type="entry name" value="CHCHD4"/>
</dbReference>
<dbReference type="PANTHER" id="PTHR21622">
    <property type="entry name" value="COILED-COIL-HELIX-COILED-COIL-HELIX DOMAIN CONTAINING 4"/>
    <property type="match status" value="1"/>
</dbReference>
<dbReference type="PANTHER" id="PTHR21622:SF0">
    <property type="entry name" value="COILED-COIL-HELIX-COILED-COIL-HELIX DOMAIN CONTAINING 4"/>
    <property type="match status" value="1"/>
</dbReference>
<dbReference type="Pfam" id="PF06747">
    <property type="entry name" value="CHCH"/>
    <property type="match status" value="1"/>
</dbReference>
<dbReference type="PROSITE" id="PS51808">
    <property type="entry name" value="CHCH"/>
    <property type="match status" value="1"/>
</dbReference>
<feature type="transit peptide" description="Mitochondrion" evidence="2">
    <location>
        <begin position="1"/>
        <end position="34"/>
    </location>
</feature>
<feature type="chain" id="PRO_0000235286" description="Mitochondrial intermembrane space import and assembly protein 40">
    <location>
        <begin position="35"/>
        <end position="404"/>
    </location>
</feature>
<feature type="topological domain" description="Mitochondrial matrix" evidence="2">
    <location>
        <begin position="35"/>
        <end position="50"/>
    </location>
</feature>
<feature type="transmembrane region" description="Helical; Signal-anchor for type II membrane protein" evidence="2">
    <location>
        <begin position="51"/>
        <end position="71"/>
    </location>
</feature>
<feature type="topological domain" description="Mitochondrial intermembrane" evidence="2">
    <location>
        <begin position="72"/>
        <end position="404"/>
    </location>
</feature>
<feature type="domain" description="CHCH" evidence="3">
    <location>
        <begin position="299"/>
        <end position="343"/>
    </location>
</feature>
<feature type="region of interest" description="Disordered" evidence="4">
    <location>
        <begin position="84"/>
        <end position="287"/>
    </location>
</feature>
<feature type="region of interest" description="Disordered" evidence="4">
    <location>
        <begin position="346"/>
        <end position="404"/>
    </location>
</feature>
<feature type="short sequence motif" description="Cx9C motif 1" evidence="3">
    <location>
        <begin position="302"/>
        <end position="312"/>
    </location>
</feature>
<feature type="short sequence motif" description="Cx9C motif 2" evidence="3">
    <location>
        <begin position="325"/>
        <end position="335"/>
    </location>
</feature>
<feature type="compositionally biased region" description="Low complexity" evidence="4">
    <location>
        <begin position="101"/>
        <end position="113"/>
    </location>
</feature>
<feature type="compositionally biased region" description="Polar residues" evidence="4">
    <location>
        <begin position="124"/>
        <end position="135"/>
    </location>
</feature>
<feature type="compositionally biased region" description="Basic and acidic residues" evidence="4">
    <location>
        <begin position="136"/>
        <end position="156"/>
    </location>
</feature>
<feature type="compositionally biased region" description="Basic and acidic residues" evidence="4">
    <location>
        <begin position="226"/>
        <end position="237"/>
    </location>
</feature>
<feature type="compositionally biased region" description="Basic and acidic residues" evidence="4">
    <location>
        <begin position="246"/>
        <end position="276"/>
    </location>
</feature>
<feature type="compositionally biased region" description="Basic and acidic residues" evidence="4">
    <location>
        <begin position="357"/>
        <end position="391"/>
    </location>
</feature>
<feature type="disulfide bond" description="Redox-active" evidence="1">
    <location>
        <begin position="291"/>
        <end position="293"/>
    </location>
</feature>
<feature type="disulfide bond" evidence="3">
    <location>
        <begin position="302"/>
        <end position="335"/>
    </location>
</feature>
<feature type="disulfide bond" evidence="3">
    <location>
        <begin position="312"/>
        <end position="325"/>
    </location>
</feature>
<reference key="1">
    <citation type="journal article" date="2004" name="Nature">
        <title>Genome evolution in yeasts.</title>
        <authorList>
            <person name="Dujon B."/>
            <person name="Sherman D."/>
            <person name="Fischer G."/>
            <person name="Durrens P."/>
            <person name="Casaregola S."/>
            <person name="Lafontaine I."/>
            <person name="de Montigny J."/>
            <person name="Marck C."/>
            <person name="Neuveglise C."/>
            <person name="Talla E."/>
            <person name="Goffard N."/>
            <person name="Frangeul L."/>
            <person name="Aigle M."/>
            <person name="Anthouard V."/>
            <person name="Babour A."/>
            <person name="Barbe V."/>
            <person name="Barnay S."/>
            <person name="Blanchin S."/>
            <person name="Beckerich J.-M."/>
            <person name="Beyne E."/>
            <person name="Bleykasten C."/>
            <person name="Boisrame A."/>
            <person name="Boyer J."/>
            <person name="Cattolico L."/>
            <person name="Confanioleri F."/>
            <person name="de Daruvar A."/>
            <person name="Despons L."/>
            <person name="Fabre E."/>
            <person name="Fairhead C."/>
            <person name="Ferry-Dumazet H."/>
            <person name="Groppi A."/>
            <person name="Hantraye F."/>
            <person name="Hennequin C."/>
            <person name="Jauniaux N."/>
            <person name="Joyet P."/>
            <person name="Kachouri R."/>
            <person name="Kerrest A."/>
            <person name="Koszul R."/>
            <person name="Lemaire M."/>
            <person name="Lesur I."/>
            <person name="Ma L."/>
            <person name="Muller H."/>
            <person name="Nicaud J.-M."/>
            <person name="Nikolski M."/>
            <person name="Oztas S."/>
            <person name="Ozier-Kalogeropoulos O."/>
            <person name="Pellenz S."/>
            <person name="Potier S."/>
            <person name="Richard G.-F."/>
            <person name="Straub M.-L."/>
            <person name="Suleau A."/>
            <person name="Swennen D."/>
            <person name="Tekaia F."/>
            <person name="Wesolowski-Louvel M."/>
            <person name="Westhof E."/>
            <person name="Wirth B."/>
            <person name="Zeniou-Meyer M."/>
            <person name="Zivanovic Y."/>
            <person name="Bolotin-Fukuhara M."/>
            <person name="Thierry A."/>
            <person name="Bouchier C."/>
            <person name="Caudron B."/>
            <person name="Scarpelli C."/>
            <person name="Gaillardin C."/>
            <person name="Weissenbach J."/>
            <person name="Wincker P."/>
            <person name="Souciet J.-L."/>
        </authorList>
    </citation>
    <scope>NUCLEOTIDE SEQUENCE [LARGE SCALE GENOMIC DNA]</scope>
    <source>
        <strain>ATCC 2001 / BCRC 20586 / JCM 3761 / NBRC 0622 / NRRL Y-65 / CBS 138</strain>
    </source>
</reference>